<dbReference type="EC" id="7.1.2.2" evidence="1"/>
<dbReference type="EMBL" id="U93834">
    <property type="protein sequence ID" value="AAB51742.1"/>
    <property type="molecule type" value="Genomic_DNA"/>
</dbReference>
<dbReference type="SMR" id="O03080"/>
<dbReference type="GO" id="GO:0009535">
    <property type="term" value="C:chloroplast thylakoid membrane"/>
    <property type="evidence" value="ECO:0007669"/>
    <property type="project" value="UniProtKB-SubCell"/>
</dbReference>
<dbReference type="GO" id="GO:0005739">
    <property type="term" value="C:mitochondrion"/>
    <property type="evidence" value="ECO:0007669"/>
    <property type="project" value="GOC"/>
</dbReference>
<dbReference type="GO" id="GO:0045259">
    <property type="term" value="C:proton-transporting ATP synthase complex"/>
    <property type="evidence" value="ECO:0007669"/>
    <property type="project" value="UniProtKB-KW"/>
</dbReference>
<dbReference type="GO" id="GO:0005524">
    <property type="term" value="F:ATP binding"/>
    <property type="evidence" value="ECO:0007669"/>
    <property type="project" value="UniProtKB-KW"/>
</dbReference>
<dbReference type="GO" id="GO:0016887">
    <property type="term" value="F:ATP hydrolysis activity"/>
    <property type="evidence" value="ECO:0007669"/>
    <property type="project" value="InterPro"/>
</dbReference>
<dbReference type="GO" id="GO:0046933">
    <property type="term" value="F:proton-transporting ATP synthase activity, rotational mechanism"/>
    <property type="evidence" value="ECO:0007669"/>
    <property type="project" value="InterPro"/>
</dbReference>
<dbReference type="GO" id="GO:0042776">
    <property type="term" value="P:proton motive force-driven mitochondrial ATP synthesis"/>
    <property type="evidence" value="ECO:0007669"/>
    <property type="project" value="TreeGrafter"/>
</dbReference>
<dbReference type="CDD" id="cd18110">
    <property type="entry name" value="ATP-synt_F1_beta_C"/>
    <property type="match status" value="1"/>
</dbReference>
<dbReference type="CDD" id="cd18115">
    <property type="entry name" value="ATP-synt_F1_beta_N"/>
    <property type="match status" value="1"/>
</dbReference>
<dbReference type="CDD" id="cd01133">
    <property type="entry name" value="F1-ATPase_beta_CD"/>
    <property type="match status" value="1"/>
</dbReference>
<dbReference type="FunFam" id="1.10.1140.10:FF:000005">
    <property type="entry name" value="ATP synthase subunit beta"/>
    <property type="match status" value="1"/>
</dbReference>
<dbReference type="FunFam" id="3.40.50.300:FF:000026">
    <property type="entry name" value="ATP synthase subunit beta"/>
    <property type="match status" value="1"/>
</dbReference>
<dbReference type="FunFam" id="2.40.10.170:FF:000002">
    <property type="entry name" value="ATP synthase subunit beta, chloroplastic"/>
    <property type="match status" value="1"/>
</dbReference>
<dbReference type="Gene3D" id="2.40.10.170">
    <property type="match status" value="1"/>
</dbReference>
<dbReference type="Gene3D" id="1.10.1140.10">
    <property type="entry name" value="Bovine Mitochondrial F1-atpase, Atp Synthase Beta Chain, Chain D, domain 3"/>
    <property type="match status" value="1"/>
</dbReference>
<dbReference type="Gene3D" id="3.40.50.300">
    <property type="entry name" value="P-loop containing nucleotide triphosphate hydrolases"/>
    <property type="match status" value="1"/>
</dbReference>
<dbReference type="HAMAP" id="MF_01347">
    <property type="entry name" value="ATP_synth_beta_bact"/>
    <property type="match status" value="1"/>
</dbReference>
<dbReference type="InterPro" id="IPR003593">
    <property type="entry name" value="AAA+_ATPase"/>
</dbReference>
<dbReference type="InterPro" id="IPR055190">
    <property type="entry name" value="ATP-synt_VA_C"/>
</dbReference>
<dbReference type="InterPro" id="IPR005722">
    <property type="entry name" value="ATP_synth_F1_bsu"/>
</dbReference>
<dbReference type="InterPro" id="IPR020003">
    <property type="entry name" value="ATPase_a/bsu_AS"/>
</dbReference>
<dbReference type="InterPro" id="IPR050053">
    <property type="entry name" value="ATPase_alpha/beta_chains"/>
</dbReference>
<dbReference type="InterPro" id="IPR004100">
    <property type="entry name" value="ATPase_F1/V1/A1_a/bsu_N"/>
</dbReference>
<dbReference type="InterPro" id="IPR036121">
    <property type="entry name" value="ATPase_F1/V1/A1_a/bsu_N_sf"/>
</dbReference>
<dbReference type="InterPro" id="IPR000194">
    <property type="entry name" value="ATPase_F1/V1/A1_a/bsu_nucl-bd"/>
</dbReference>
<dbReference type="InterPro" id="IPR024034">
    <property type="entry name" value="ATPase_F1/V1_b/a_C"/>
</dbReference>
<dbReference type="InterPro" id="IPR027417">
    <property type="entry name" value="P-loop_NTPase"/>
</dbReference>
<dbReference type="NCBIfam" id="TIGR01039">
    <property type="entry name" value="atpD"/>
    <property type="match status" value="1"/>
</dbReference>
<dbReference type="PANTHER" id="PTHR15184">
    <property type="entry name" value="ATP SYNTHASE"/>
    <property type="match status" value="1"/>
</dbReference>
<dbReference type="PANTHER" id="PTHR15184:SF71">
    <property type="entry name" value="ATP SYNTHASE SUBUNIT BETA, MITOCHONDRIAL"/>
    <property type="match status" value="1"/>
</dbReference>
<dbReference type="Pfam" id="PF00006">
    <property type="entry name" value="ATP-synt_ab"/>
    <property type="match status" value="1"/>
</dbReference>
<dbReference type="Pfam" id="PF02874">
    <property type="entry name" value="ATP-synt_ab_N"/>
    <property type="match status" value="1"/>
</dbReference>
<dbReference type="Pfam" id="PF22919">
    <property type="entry name" value="ATP-synt_VA_C"/>
    <property type="match status" value="1"/>
</dbReference>
<dbReference type="SMART" id="SM00382">
    <property type="entry name" value="AAA"/>
    <property type="match status" value="1"/>
</dbReference>
<dbReference type="SUPFAM" id="SSF47917">
    <property type="entry name" value="C-terminal domain of alpha and beta subunits of F1 ATP synthase"/>
    <property type="match status" value="1"/>
</dbReference>
<dbReference type="SUPFAM" id="SSF50615">
    <property type="entry name" value="N-terminal domain of alpha and beta subunits of F1 ATP synthase"/>
    <property type="match status" value="1"/>
</dbReference>
<dbReference type="SUPFAM" id="SSF52540">
    <property type="entry name" value="P-loop containing nucleoside triphosphate hydrolases"/>
    <property type="match status" value="1"/>
</dbReference>
<dbReference type="PROSITE" id="PS00152">
    <property type="entry name" value="ATPASE_ALPHA_BETA"/>
    <property type="match status" value="1"/>
</dbReference>
<accession>O03080</accession>
<keyword id="KW-0066">ATP synthesis</keyword>
<keyword id="KW-0067">ATP-binding</keyword>
<keyword id="KW-0139">CF(1)</keyword>
<keyword id="KW-0150">Chloroplast</keyword>
<keyword id="KW-0375">Hydrogen ion transport</keyword>
<keyword id="KW-0406">Ion transport</keyword>
<keyword id="KW-0472">Membrane</keyword>
<keyword id="KW-0547">Nucleotide-binding</keyword>
<keyword id="KW-0934">Plastid</keyword>
<keyword id="KW-0793">Thylakoid</keyword>
<keyword id="KW-1278">Translocase</keyword>
<keyword id="KW-0813">Transport</keyword>
<organism>
    <name type="scientific">Pteridium esculentum</name>
    <name type="common">Bracken fern</name>
    <dbReference type="NCBI Taxonomy" id="32102"/>
    <lineage>
        <taxon>Eukaryota</taxon>
        <taxon>Viridiplantae</taxon>
        <taxon>Streptophyta</taxon>
        <taxon>Embryophyta</taxon>
        <taxon>Tracheophyta</taxon>
        <taxon>Polypodiopsida</taxon>
        <taxon>Polypodiidae</taxon>
        <taxon>Polypodiales</taxon>
        <taxon>Dennstaedtiineae</taxon>
        <taxon>Dennstaedtiaceae</taxon>
        <taxon>Pteridium</taxon>
    </lineage>
</organism>
<geneLocation type="chloroplast"/>
<name>ATPB_PTEES</name>
<comment type="function">
    <text evidence="1">Produces ATP from ADP in the presence of a proton gradient across the membrane. The catalytic sites are hosted primarily by the beta subunits.</text>
</comment>
<comment type="catalytic activity">
    <reaction evidence="1">
        <text>ATP + H2O + 4 H(+)(in) = ADP + phosphate + 5 H(+)(out)</text>
        <dbReference type="Rhea" id="RHEA:57720"/>
        <dbReference type="ChEBI" id="CHEBI:15377"/>
        <dbReference type="ChEBI" id="CHEBI:15378"/>
        <dbReference type="ChEBI" id="CHEBI:30616"/>
        <dbReference type="ChEBI" id="CHEBI:43474"/>
        <dbReference type="ChEBI" id="CHEBI:456216"/>
        <dbReference type="EC" id="7.1.2.2"/>
    </reaction>
</comment>
<comment type="subunit">
    <text evidence="1">F-type ATPases have 2 components, CF(1) - the catalytic core - and CF(0) - the membrane proton channel. CF(1) has five subunits: alpha(3), beta(3), gamma(1), delta(1), epsilon(1). CF(0) has four main subunits: a(1), b(1), b'(1) and c(9-12).</text>
</comment>
<comment type="subcellular location">
    <subcellularLocation>
        <location evidence="1">Plastid</location>
        <location evidence="1">Chloroplast thylakoid membrane</location>
        <topology evidence="1">Peripheral membrane protein</topology>
    </subcellularLocation>
</comment>
<comment type="similarity">
    <text evidence="1">Belongs to the ATPase alpha/beta chains family.</text>
</comment>
<reference key="1">
    <citation type="journal article" date="1997" name="Am. J. Bot.">
        <title>Evaluation of atpB nucleotide sequences for phylogenetic studies of ferns and other pteridophytes.</title>
        <authorList>
            <person name="Wolf P.G."/>
        </authorList>
    </citation>
    <scope>NUCLEOTIDE SEQUENCE [GENOMIC DNA]</scope>
</reference>
<proteinExistence type="inferred from homology"/>
<feature type="chain" id="PRO_0000144545" description="ATP synthase subunit beta, chloroplastic">
    <location>
        <begin position="1" status="less than"/>
        <end position="473" status="greater than"/>
    </location>
</feature>
<feature type="binding site" evidence="1">
    <location>
        <begin position="172"/>
        <end position="179"/>
    </location>
    <ligand>
        <name>ATP</name>
        <dbReference type="ChEBI" id="CHEBI:30616"/>
    </ligand>
</feature>
<feature type="non-terminal residue">
    <location>
        <position position="1"/>
    </location>
</feature>
<feature type="non-terminal residue">
    <location>
        <position position="473"/>
    </location>
</feature>
<protein>
    <recommendedName>
        <fullName evidence="1">ATP synthase subunit beta, chloroplastic</fullName>
        <ecNumber evidence="1">7.1.2.2</ecNumber>
    </recommendedName>
    <alternativeName>
        <fullName evidence="1">ATP synthase F1 sector subunit beta</fullName>
    </alternativeName>
    <alternativeName>
        <fullName evidence="1">F-ATPase subunit beta</fullName>
    </alternativeName>
</protein>
<gene>
    <name evidence="1" type="primary">atpB</name>
</gene>
<sequence length="473" mass="50434">IVTKTSFLSFEISELVKKNVGYITQIIGPVLDVASSPGKMPNIYNSLIIKGQNSAGQELNVTCEVQQLLGNNEVRAVAMSATDGLTRGMGAVDTGAPLSVPVGETTLGRISNVLGEPVDNLGPVQSSTTFPIHRSAPAFIQLDTKLSIFETGIKVVDLSAPYRRGGKIGLFGGAGVGKTVLITELINNIAKAHGGVSVSGGVGERTREGNDPYMEMKESKVINEQNISESKVALVYGQMNEPPGASMRVGSTASTMAEYFRDVNKQDVLPFIDYILRFVQAGSEVSALLGRMPSAVGYQPTLGTEMGSSQERITSTKDGSITSIQAVYVPADDLTDPAPATTSAHLDATTVLSRGLAAKGIYPAVDPLDSTSTMSQPWIVGEEHYETAQGVKQTSQRYKELQDIIAILGLDELSEEDRLTVARARKIERFSSQPSFVAEVFTGSPGKYVSLPETIKGFQMILPGELDNLPEQA</sequence>
<evidence type="ECO:0000255" key="1">
    <source>
        <dbReference type="HAMAP-Rule" id="MF_01347"/>
    </source>
</evidence>